<dbReference type="EMBL" id="AF077202">
    <property type="protein sequence ID" value="AAD26997.1"/>
    <property type="molecule type" value="mRNA"/>
</dbReference>
<dbReference type="EMBL" id="AY508979">
    <property type="protein sequence ID" value="AAR87665.1"/>
    <property type="molecule type" value="mRNA"/>
</dbReference>
<dbReference type="EMBL" id="AY794023">
    <property type="protein sequence ID" value="AAV40981.1"/>
    <property type="molecule type" value="mRNA"/>
</dbReference>
<dbReference type="EMBL" id="BC080531">
    <property type="protein sequence ID" value="AAH80531.1"/>
    <property type="molecule type" value="mRNA"/>
</dbReference>
<dbReference type="EMBL" id="AF161448">
    <property type="protein sequence ID" value="AAF29008.1"/>
    <property type="molecule type" value="mRNA"/>
</dbReference>
<dbReference type="CCDS" id="CCDS46823.1"/>
<dbReference type="RefSeq" id="NP_057017.1">
    <property type="nucleotide sequence ID" value="NM_015933.6"/>
</dbReference>
<dbReference type="BioGRID" id="119505">
    <property type="interactions" value="54"/>
</dbReference>
<dbReference type="FunCoup" id="Q9Y2S6">
    <property type="interactions" value="867"/>
</dbReference>
<dbReference type="IntAct" id="Q9Y2S6">
    <property type="interactions" value="17"/>
</dbReference>
<dbReference type="MINT" id="Q9Y2S6"/>
<dbReference type="STRING" id="9606.ENSP00000397843"/>
<dbReference type="GlyGen" id="Q9Y2S6">
    <property type="glycosylation" value="1 site, 1 O-linked glycan (1 site)"/>
</dbReference>
<dbReference type="iPTMnet" id="Q9Y2S6"/>
<dbReference type="MetOSite" id="Q9Y2S6"/>
<dbReference type="PhosphoSitePlus" id="Q9Y2S6"/>
<dbReference type="BioMuta" id="TMA7"/>
<dbReference type="jPOST" id="Q9Y2S6"/>
<dbReference type="MassIVE" id="Q9Y2S6"/>
<dbReference type="PaxDb" id="9606-ENSP00000397843"/>
<dbReference type="PeptideAtlas" id="Q9Y2S6"/>
<dbReference type="ProteomicsDB" id="85886"/>
<dbReference type="Pumba" id="Q9Y2S6"/>
<dbReference type="TopDownProteomics" id="Q9Y2S6"/>
<dbReference type="Antibodypedia" id="45855">
    <property type="antibodies" value="19 antibodies from 12 providers"/>
</dbReference>
<dbReference type="DNASU" id="51372"/>
<dbReference type="Ensembl" id="ENST00000438607.2">
    <property type="protein sequence ID" value="ENSP00000397843.2"/>
    <property type="gene ID" value="ENSG00000232112.3"/>
</dbReference>
<dbReference type="GeneID" id="51372"/>
<dbReference type="KEGG" id="hsa:51372"/>
<dbReference type="MANE-Select" id="ENST00000438607.2">
    <property type="protein sequence ID" value="ENSP00000397843.2"/>
    <property type="RefSeq nucleotide sequence ID" value="NM_015933.6"/>
    <property type="RefSeq protein sequence ID" value="NP_057017.1"/>
</dbReference>
<dbReference type="UCSC" id="uc003cte.2">
    <property type="organism name" value="human"/>
</dbReference>
<dbReference type="AGR" id="HGNC:26932"/>
<dbReference type="CTD" id="51372"/>
<dbReference type="GeneCards" id="TMA7"/>
<dbReference type="HGNC" id="HGNC:26932">
    <property type="gene designation" value="TMA7"/>
</dbReference>
<dbReference type="HPA" id="ENSG00000232112">
    <property type="expression patterns" value="Low tissue specificity"/>
</dbReference>
<dbReference type="MIM" id="615808">
    <property type="type" value="gene"/>
</dbReference>
<dbReference type="neXtProt" id="NX_Q9Y2S6"/>
<dbReference type="OpenTargets" id="ENSG00000232112"/>
<dbReference type="PharmGKB" id="PA143485423"/>
<dbReference type="VEuPathDB" id="HostDB:ENSG00000232112"/>
<dbReference type="eggNOG" id="KOG4766">
    <property type="taxonomic scope" value="Eukaryota"/>
</dbReference>
<dbReference type="GeneTree" id="ENSGT00390000003710"/>
<dbReference type="HOGENOM" id="CLU_184661_1_1_1"/>
<dbReference type="InParanoid" id="Q9Y2S6"/>
<dbReference type="OMA" id="KKGPMNT"/>
<dbReference type="PAN-GO" id="Q9Y2S6">
    <property type="GO annotations" value="0 GO annotations based on evolutionary models"/>
</dbReference>
<dbReference type="TreeFam" id="TF300250"/>
<dbReference type="PathwayCommons" id="Q9Y2S6"/>
<dbReference type="SignaLink" id="Q9Y2S6"/>
<dbReference type="BioGRID-ORCS" id="51372">
    <property type="hits" value="241 hits in 1143 CRISPR screens"/>
</dbReference>
<dbReference type="CD-CODE" id="91857CE7">
    <property type="entry name" value="Nucleolus"/>
</dbReference>
<dbReference type="ChiTaRS" id="TMA7">
    <property type="organism name" value="human"/>
</dbReference>
<dbReference type="GenomeRNAi" id="51372"/>
<dbReference type="Pharos" id="Q9Y2S6">
    <property type="development level" value="Tdark"/>
</dbReference>
<dbReference type="PRO" id="PR:Q9Y2S6"/>
<dbReference type="Proteomes" id="UP000005640">
    <property type="component" value="Chromosome 3"/>
</dbReference>
<dbReference type="RNAct" id="Q9Y2S6">
    <property type="molecule type" value="protein"/>
</dbReference>
<dbReference type="Bgee" id="ENSG00000232112">
    <property type="expression patterns" value="Expressed in granulocyte and 100 other cell types or tissues"/>
</dbReference>
<dbReference type="InterPro" id="IPR015157">
    <property type="entry name" value="TMA7"/>
</dbReference>
<dbReference type="PANTHER" id="PTHR28632">
    <property type="entry name" value="TRANSLATION MACHINERY-ASSOCIATED PROTEIN 7"/>
    <property type="match status" value="1"/>
</dbReference>
<dbReference type="Pfam" id="PF09072">
    <property type="entry name" value="TMA7"/>
    <property type="match status" value="1"/>
</dbReference>
<comment type="tissue specificity">
    <text evidence="3">Expressed in dermal papilla cells with aggregative behavior.</text>
</comment>
<comment type="similarity">
    <text evidence="5">Belongs to the TMA7 family.</text>
</comment>
<evidence type="ECO:0000255" key="1"/>
<evidence type="ECO:0000256" key="2">
    <source>
        <dbReference type="SAM" id="MobiDB-lite"/>
    </source>
</evidence>
<evidence type="ECO:0000269" key="3">
    <source>
    </source>
</evidence>
<evidence type="ECO:0000269" key="4">
    <source>
    </source>
</evidence>
<evidence type="ECO:0000305" key="5"/>
<name>TMA7_HUMAN</name>
<feature type="chain" id="PRO_0000235681" description="Translation machinery-associated protein 7">
    <location>
        <begin position="1"/>
        <end position="64"/>
    </location>
</feature>
<feature type="region of interest" description="Disordered" evidence="2">
    <location>
        <begin position="1"/>
        <end position="64"/>
    </location>
</feature>
<feature type="coiled-coil region" evidence="1">
    <location>
        <begin position="21"/>
        <end position="50"/>
    </location>
</feature>
<feature type="compositionally biased region" description="Basic and acidic residues" evidence="2">
    <location>
        <begin position="27"/>
        <end position="45"/>
    </location>
</feature>
<feature type="modified residue" description="ADP-ribosylserine" evidence="4">
    <location>
        <position position="61"/>
    </location>
</feature>
<protein>
    <recommendedName>
        <fullName>Translation machinery-associated protein 7</fullName>
    </recommendedName>
    <alternativeName>
        <fullName>Coiled-coil domain-containing protein 72</fullName>
    </alternativeName>
</protein>
<proteinExistence type="evidence at protein level"/>
<gene>
    <name type="primary">TMA7</name>
    <name type="synonym">CCDC72</name>
    <name type="ORF">HSPC016</name>
    <name type="ORF">HSPC330</name>
</gene>
<sequence>MSGREGGKKKPLKQPKKQAKEMDEEDKAFKQKQKEEQKKLEELKAKAAGKGPLATGGIKKSGKK</sequence>
<organism>
    <name type="scientific">Homo sapiens</name>
    <name type="common">Human</name>
    <dbReference type="NCBI Taxonomy" id="9606"/>
    <lineage>
        <taxon>Eukaryota</taxon>
        <taxon>Metazoa</taxon>
        <taxon>Chordata</taxon>
        <taxon>Craniata</taxon>
        <taxon>Vertebrata</taxon>
        <taxon>Euteleostomi</taxon>
        <taxon>Mammalia</taxon>
        <taxon>Eutheria</taxon>
        <taxon>Euarchontoglires</taxon>
        <taxon>Primates</taxon>
        <taxon>Haplorrhini</taxon>
        <taxon>Catarrhini</taxon>
        <taxon>Hominidae</taxon>
        <taxon>Homo</taxon>
    </lineage>
</organism>
<keyword id="KW-0013">ADP-ribosylation</keyword>
<keyword id="KW-0175">Coiled coil</keyword>
<keyword id="KW-1267">Proteomics identification</keyword>
<keyword id="KW-1185">Reference proteome</keyword>
<reference key="1">
    <citation type="journal article" date="2000" name="Genome Res.">
        <title>Cloning and functional analysis of cDNAs with open reading frames for 300 previously undefined genes expressed in CD34+ hematopoietic stem/progenitor cells.</title>
        <authorList>
            <person name="Zhang Q.-H."/>
            <person name="Ye M."/>
            <person name="Wu X.-Y."/>
            <person name="Ren S.-X."/>
            <person name="Zhao M."/>
            <person name="Zhao C.-J."/>
            <person name="Fu G."/>
            <person name="Shen Y."/>
            <person name="Fan H.-Y."/>
            <person name="Lu G."/>
            <person name="Zhong M."/>
            <person name="Xu X.-R."/>
            <person name="Han Z.-G."/>
            <person name="Zhang J.-W."/>
            <person name="Tao J."/>
            <person name="Huang Q.-H."/>
            <person name="Zhou J."/>
            <person name="Hu G.-X."/>
            <person name="Gu J."/>
            <person name="Chen S.-J."/>
            <person name="Chen Z."/>
        </authorList>
    </citation>
    <scope>NUCLEOTIDE SEQUENCE [LARGE SCALE MRNA]</scope>
    <source>
        <tissue>Umbilical cord blood</tissue>
    </source>
</reference>
<reference key="2">
    <citation type="submission" date="2004-09" db="EMBL/GenBank/DDBJ databases">
        <title>Analysis of dermal-papillae-cell-specific gene: HSPC016 and its subtypes.</title>
        <authorList>
            <person name="Wang J.W."/>
            <person name="Song Z.Q."/>
            <person name="Hao F."/>
        </authorList>
    </citation>
    <scope>NUCLEOTIDE SEQUENCE [MRNA]</scope>
    <source>
        <tissue>Hair follicle</tissue>
    </source>
</reference>
<reference key="3">
    <citation type="journal article" date="2004" name="Genome Res.">
        <title>The status, quality, and expansion of the NIH full-length cDNA project: the Mammalian Gene Collection (MGC).</title>
        <authorList>
            <consortium name="The MGC Project Team"/>
        </authorList>
    </citation>
    <scope>NUCLEOTIDE SEQUENCE [LARGE SCALE MRNA]</scope>
    <source>
        <tissue>Eye</tissue>
    </source>
</reference>
<reference key="4">
    <citation type="submission" date="1999-05" db="EMBL/GenBank/DDBJ databases">
        <title>Human partial CDS from CD34+ stem cells.</title>
        <authorList>
            <person name="Ye M."/>
            <person name="Zhang Q.-H."/>
            <person name="Zhou J."/>
            <person name="Shen Y."/>
            <person name="Wu X.-Y."/>
            <person name="Guan Z.Q."/>
            <person name="Wang L."/>
            <person name="Fan H.-Y."/>
            <person name="Mao Y.-F."/>
            <person name="Dai M."/>
            <person name="Huang Q.-H."/>
            <person name="Chen S.-J."/>
            <person name="Chen Z."/>
        </authorList>
    </citation>
    <scope>NUCLEOTIDE SEQUENCE [LARGE SCALE MRNA] OF 6-64</scope>
    <source>
        <tissue>Umbilical cord blood</tissue>
    </source>
</reference>
<reference key="5">
    <citation type="journal article" date="2005" name="Arch. Dermatol. Res.">
        <title>Identification of differentially expressed genes HSPC016 in dermal papilla cells with aggregative behavior.</title>
        <authorList>
            <person name="Zhiqiang S."/>
            <person name="Jiwen W."/>
            <person name="Fei H."/>
            <person name="Weibin Y."/>
            <person name="Feng Z."/>
            <person name="Xichuan Y."/>
            <person name="Chunlan L."/>
        </authorList>
    </citation>
    <scope>TISSUE SPECIFICITY</scope>
    <source>
        <tissue>Hair follicle</tissue>
    </source>
</reference>
<reference key="6">
    <citation type="journal article" date="2011" name="BMC Syst. Biol.">
        <title>Initial characterization of the human central proteome.</title>
        <authorList>
            <person name="Burkard T.R."/>
            <person name="Planyavsky M."/>
            <person name="Kaupe I."/>
            <person name="Breitwieser F.P."/>
            <person name="Buerckstuemmer T."/>
            <person name="Bennett K.L."/>
            <person name="Superti-Furga G."/>
            <person name="Colinge J."/>
        </authorList>
    </citation>
    <scope>IDENTIFICATION BY MASS SPECTROMETRY [LARGE SCALE ANALYSIS]</scope>
</reference>
<reference key="7">
    <citation type="journal article" date="2017" name="Mol. Cell">
        <title>Serine ADP-ribosylation depends on HPF1.</title>
        <authorList>
            <person name="Bonfiglio J.J."/>
            <person name="Fontana P."/>
            <person name="Zhang Q."/>
            <person name="Colby T."/>
            <person name="Gibbs-Seymour I."/>
            <person name="Atanassov I."/>
            <person name="Bartlett E."/>
            <person name="Zaja R."/>
            <person name="Ahel I."/>
            <person name="Matic I."/>
        </authorList>
    </citation>
    <scope>ADP-RIBOSYLATION AT SER-61</scope>
</reference>
<accession>Q9Y2S6</accession>
<accession>Q9P052</accession>